<comment type="subunit">
    <text evidence="1">Part of the 30S ribosomal subunit.</text>
</comment>
<comment type="subcellular location">
    <subcellularLocation>
        <location>Plastid</location>
        <location>Chloroplast</location>
    </subcellularLocation>
</comment>
<comment type="similarity">
    <text evidence="2">Belongs to the universal ribosomal protein uS15 family.</text>
</comment>
<reference key="1">
    <citation type="submission" date="2007-03" db="EMBL/GenBank/DDBJ databases">
        <title>Sequencing analysis of Barbarea verna chloroplast DNA.</title>
        <authorList>
            <person name="Hosouchi T."/>
            <person name="Tsuruoka H."/>
            <person name="Kotani H."/>
        </authorList>
    </citation>
    <scope>NUCLEOTIDE SEQUENCE [LARGE SCALE GENOMIC DNA]</scope>
</reference>
<feature type="chain" id="PRO_0000354238" description="Small ribosomal subunit protein uS15c">
    <location>
        <begin position="1"/>
        <end position="88"/>
    </location>
</feature>
<keyword id="KW-0150">Chloroplast</keyword>
<keyword id="KW-0934">Plastid</keyword>
<keyword id="KW-0687">Ribonucleoprotein</keyword>
<keyword id="KW-0689">Ribosomal protein</keyword>
<proteinExistence type="inferred from homology"/>
<accession>A4QKG4</accession>
<name>RR15_BARVE</name>
<sequence length="88" mass="10696">MIKNAFISFQEQKEESKGSVEFQVFSFTNKIRRLTSHLELHRKDYLSQRGLRKILGKRQRLLAYLSKKNRVRYKELINQLNIRELKTR</sequence>
<gene>
    <name type="primary">rps15</name>
</gene>
<protein>
    <recommendedName>
        <fullName evidence="2">Small ribosomal subunit protein uS15c</fullName>
    </recommendedName>
    <alternativeName>
        <fullName>30S ribosomal protein S15, chloroplastic</fullName>
    </alternativeName>
</protein>
<geneLocation type="chloroplast"/>
<evidence type="ECO:0000250" key="1"/>
<evidence type="ECO:0000305" key="2"/>
<dbReference type="EMBL" id="AP009370">
    <property type="protein sequence ID" value="BAF50169.1"/>
    <property type="molecule type" value="Genomic_DNA"/>
</dbReference>
<dbReference type="RefSeq" id="YP_001123344.1">
    <property type="nucleotide sequence ID" value="NC_009269.1"/>
</dbReference>
<dbReference type="SMR" id="A4QKG4"/>
<dbReference type="GeneID" id="4961929"/>
<dbReference type="GO" id="GO:0009507">
    <property type="term" value="C:chloroplast"/>
    <property type="evidence" value="ECO:0007669"/>
    <property type="project" value="UniProtKB-SubCell"/>
</dbReference>
<dbReference type="GO" id="GO:1990904">
    <property type="term" value="C:ribonucleoprotein complex"/>
    <property type="evidence" value="ECO:0007669"/>
    <property type="project" value="UniProtKB-KW"/>
</dbReference>
<dbReference type="GO" id="GO:0005840">
    <property type="term" value="C:ribosome"/>
    <property type="evidence" value="ECO:0007669"/>
    <property type="project" value="UniProtKB-KW"/>
</dbReference>
<dbReference type="GO" id="GO:0003735">
    <property type="term" value="F:structural constituent of ribosome"/>
    <property type="evidence" value="ECO:0007669"/>
    <property type="project" value="InterPro"/>
</dbReference>
<dbReference type="GO" id="GO:0006412">
    <property type="term" value="P:translation"/>
    <property type="evidence" value="ECO:0007669"/>
    <property type="project" value="UniProtKB-UniRule"/>
</dbReference>
<dbReference type="CDD" id="cd00353">
    <property type="entry name" value="Ribosomal_S15p_S13e"/>
    <property type="match status" value="1"/>
</dbReference>
<dbReference type="FunFam" id="1.10.287.10:FF:000011">
    <property type="entry name" value="30S ribosomal protein S15, chloroplastic"/>
    <property type="match status" value="1"/>
</dbReference>
<dbReference type="Gene3D" id="1.10.287.10">
    <property type="entry name" value="S15/NS1, RNA-binding"/>
    <property type="match status" value="1"/>
</dbReference>
<dbReference type="HAMAP" id="MF_01343_B">
    <property type="entry name" value="Ribosomal_uS15_B"/>
    <property type="match status" value="1"/>
</dbReference>
<dbReference type="InterPro" id="IPR000589">
    <property type="entry name" value="Ribosomal_uS15"/>
</dbReference>
<dbReference type="InterPro" id="IPR005290">
    <property type="entry name" value="Ribosomal_uS15_bac-type"/>
</dbReference>
<dbReference type="InterPro" id="IPR009068">
    <property type="entry name" value="uS15_NS1_RNA-bd_sf"/>
</dbReference>
<dbReference type="NCBIfam" id="TIGR00952">
    <property type="entry name" value="S15_bact"/>
    <property type="match status" value="1"/>
</dbReference>
<dbReference type="PANTHER" id="PTHR23321">
    <property type="entry name" value="RIBOSOMAL PROTEIN S15, BACTERIAL AND ORGANELLAR"/>
    <property type="match status" value="1"/>
</dbReference>
<dbReference type="PANTHER" id="PTHR23321:SF26">
    <property type="entry name" value="SMALL RIBOSOMAL SUBUNIT PROTEIN US15M"/>
    <property type="match status" value="1"/>
</dbReference>
<dbReference type="Pfam" id="PF00312">
    <property type="entry name" value="Ribosomal_S15"/>
    <property type="match status" value="1"/>
</dbReference>
<dbReference type="SMART" id="SM01387">
    <property type="entry name" value="Ribosomal_S15"/>
    <property type="match status" value="1"/>
</dbReference>
<dbReference type="SUPFAM" id="SSF47060">
    <property type="entry name" value="S15/NS1 RNA-binding domain"/>
    <property type="match status" value="1"/>
</dbReference>
<dbReference type="PROSITE" id="PS00362">
    <property type="entry name" value="RIBOSOMAL_S15"/>
    <property type="match status" value="1"/>
</dbReference>
<organism>
    <name type="scientific">Barbarea verna</name>
    <name type="common">Land cress</name>
    <name type="synonym">Erysimum vernum</name>
    <dbReference type="NCBI Taxonomy" id="50458"/>
    <lineage>
        <taxon>Eukaryota</taxon>
        <taxon>Viridiplantae</taxon>
        <taxon>Streptophyta</taxon>
        <taxon>Embryophyta</taxon>
        <taxon>Tracheophyta</taxon>
        <taxon>Spermatophyta</taxon>
        <taxon>Magnoliopsida</taxon>
        <taxon>eudicotyledons</taxon>
        <taxon>Gunneridae</taxon>
        <taxon>Pentapetalae</taxon>
        <taxon>rosids</taxon>
        <taxon>malvids</taxon>
        <taxon>Brassicales</taxon>
        <taxon>Brassicaceae</taxon>
        <taxon>Cardamineae</taxon>
        <taxon>Barbarea</taxon>
    </lineage>
</organism>